<gene>
    <name type="primary">RTC1</name>
    <name type="ordered locus">CAALFM_CR10510WA</name>
    <name type="ORF">CaO19.7629</name>
</gene>
<protein>
    <recommendedName>
        <fullName>Restriction of telomere capping protein 1</fullName>
    </recommendedName>
</protein>
<dbReference type="EMBL" id="CP017630">
    <property type="protein sequence ID" value="AOW31700.1"/>
    <property type="molecule type" value="Genomic_DNA"/>
</dbReference>
<dbReference type="RefSeq" id="XP_719389.1">
    <property type="nucleotide sequence ID" value="XM_714296.1"/>
</dbReference>
<dbReference type="SMR" id="Q5ACL4"/>
<dbReference type="FunCoup" id="Q5ACL4">
    <property type="interactions" value="133"/>
</dbReference>
<dbReference type="STRING" id="237561.Q5ACL4"/>
<dbReference type="EnsemblFungi" id="CR_10510W_A-T">
    <property type="protein sequence ID" value="CR_10510W_A-T-p1"/>
    <property type="gene ID" value="CR_10510W_A"/>
</dbReference>
<dbReference type="GeneID" id="3639039"/>
<dbReference type="KEGG" id="cal:CAALFM_CR10510WA"/>
<dbReference type="CGD" id="CAL0000194538">
    <property type="gene designation" value="orf19.7629"/>
</dbReference>
<dbReference type="VEuPathDB" id="FungiDB:CR_10510W_A"/>
<dbReference type="eggNOG" id="KOG0269">
    <property type="taxonomic scope" value="Eukaryota"/>
</dbReference>
<dbReference type="HOGENOM" id="CLU_008512_0_0_1"/>
<dbReference type="InParanoid" id="Q5ACL4"/>
<dbReference type="OMA" id="GRDGKCC"/>
<dbReference type="OrthoDB" id="60955at2759"/>
<dbReference type="Proteomes" id="UP000000559">
    <property type="component" value="Chromosome R"/>
</dbReference>
<dbReference type="GO" id="GO:0005829">
    <property type="term" value="C:cytosol"/>
    <property type="evidence" value="ECO:0000318"/>
    <property type="project" value="GO_Central"/>
</dbReference>
<dbReference type="GO" id="GO:0061700">
    <property type="term" value="C:GATOR2 complex"/>
    <property type="evidence" value="ECO:0000318"/>
    <property type="project" value="GO_Central"/>
</dbReference>
<dbReference type="GO" id="GO:0005774">
    <property type="term" value="C:vacuolar membrane"/>
    <property type="evidence" value="ECO:0000318"/>
    <property type="project" value="GO_Central"/>
</dbReference>
<dbReference type="GO" id="GO:0008270">
    <property type="term" value="F:zinc ion binding"/>
    <property type="evidence" value="ECO:0007669"/>
    <property type="project" value="UniProtKB-KW"/>
</dbReference>
<dbReference type="GO" id="GO:0016239">
    <property type="term" value="P:positive regulation of macroautophagy"/>
    <property type="evidence" value="ECO:0000318"/>
    <property type="project" value="GO_Central"/>
</dbReference>
<dbReference type="GO" id="GO:1904263">
    <property type="term" value="P:positive regulation of TORC1 signaling"/>
    <property type="evidence" value="ECO:0000318"/>
    <property type="project" value="GO_Central"/>
</dbReference>
<dbReference type="CDD" id="cd16488">
    <property type="entry name" value="mRING-H2-C3H3C2_Mio-like"/>
    <property type="match status" value="1"/>
</dbReference>
<dbReference type="Gene3D" id="2.130.10.10">
    <property type="entry name" value="YVTN repeat-like/Quinoprotein amine dehydrogenase"/>
    <property type="match status" value="1"/>
</dbReference>
<dbReference type="InterPro" id="IPR015943">
    <property type="entry name" value="WD40/YVTN_repeat-like_dom_sf"/>
</dbReference>
<dbReference type="InterPro" id="IPR019775">
    <property type="entry name" value="WD40_repeat_CS"/>
</dbReference>
<dbReference type="InterPro" id="IPR036322">
    <property type="entry name" value="WD40_repeat_dom_sf"/>
</dbReference>
<dbReference type="InterPro" id="IPR001680">
    <property type="entry name" value="WD40_rpt"/>
</dbReference>
<dbReference type="InterPro" id="IPR037590">
    <property type="entry name" value="WDR24"/>
</dbReference>
<dbReference type="InterPro" id="IPR049566">
    <property type="entry name" value="WDR59_RTC1-like_RING_Znf"/>
</dbReference>
<dbReference type="InterPro" id="IPR001841">
    <property type="entry name" value="Znf_RING"/>
</dbReference>
<dbReference type="PANTHER" id="PTHR46200">
    <property type="entry name" value="GATOR COMPLEX PROTEIN WDR24"/>
    <property type="match status" value="1"/>
</dbReference>
<dbReference type="PANTHER" id="PTHR46200:SF1">
    <property type="entry name" value="GATOR COMPLEX PROTEIN WDR24"/>
    <property type="match status" value="1"/>
</dbReference>
<dbReference type="Pfam" id="PF00400">
    <property type="entry name" value="WD40"/>
    <property type="match status" value="2"/>
</dbReference>
<dbReference type="Pfam" id="PF17120">
    <property type="entry name" value="zf-RING_16"/>
    <property type="match status" value="1"/>
</dbReference>
<dbReference type="SMART" id="SM00320">
    <property type="entry name" value="WD40"/>
    <property type="match status" value="4"/>
</dbReference>
<dbReference type="SUPFAM" id="SSF50978">
    <property type="entry name" value="WD40 repeat-like"/>
    <property type="match status" value="1"/>
</dbReference>
<dbReference type="PROSITE" id="PS00678">
    <property type="entry name" value="WD_REPEATS_1"/>
    <property type="match status" value="1"/>
</dbReference>
<dbReference type="PROSITE" id="PS50082">
    <property type="entry name" value="WD_REPEATS_2"/>
    <property type="match status" value="1"/>
</dbReference>
<dbReference type="PROSITE" id="PS50294">
    <property type="entry name" value="WD_REPEATS_REGION"/>
    <property type="match status" value="1"/>
</dbReference>
<dbReference type="PROSITE" id="PS50089">
    <property type="entry name" value="ZF_RING_2"/>
    <property type="match status" value="1"/>
</dbReference>
<feature type="chain" id="PRO_0000408777" description="Restriction of telomere capping protein 1">
    <location>
        <begin position="1"/>
        <end position="1088"/>
    </location>
</feature>
<feature type="repeat" description="WD 1">
    <location>
        <begin position="131"/>
        <end position="170"/>
    </location>
</feature>
<feature type="repeat" description="WD 2">
    <location>
        <begin position="176"/>
        <end position="215"/>
    </location>
</feature>
<feature type="repeat" description="WD 3">
    <location>
        <begin position="222"/>
        <end position="266"/>
    </location>
</feature>
<feature type="repeat" description="WD 4">
    <location>
        <begin position="275"/>
        <end position="314"/>
    </location>
</feature>
<feature type="repeat" description="WD 5">
    <location>
        <begin position="367"/>
        <end position="417"/>
    </location>
</feature>
<feature type="repeat" description="WD 6">
    <location>
        <begin position="432"/>
        <end position="473"/>
    </location>
</feature>
<feature type="repeat" description="WD 7">
    <location>
        <begin position="502"/>
        <end position="546"/>
    </location>
</feature>
<feature type="repeat" description="WD 8">
    <location>
        <begin position="631"/>
        <end position="671"/>
    </location>
</feature>
<feature type="zinc finger region" description="RING-type; degenerate" evidence="2">
    <location>
        <begin position="1040"/>
        <end position="1083"/>
    </location>
</feature>
<feature type="region of interest" description="Disordered" evidence="3">
    <location>
        <begin position="26"/>
        <end position="56"/>
    </location>
</feature>
<feature type="region of interest" description="Disordered" evidence="3">
    <location>
        <begin position="537"/>
        <end position="597"/>
    </location>
</feature>
<feature type="region of interest" description="Disordered" evidence="3">
    <location>
        <begin position="709"/>
        <end position="751"/>
    </location>
</feature>
<feature type="region of interest" description="Disordered" evidence="3">
    <location>
        <begin position="764"/>
        <end position="829"/>
    </location>
</feature>
<feature type="region of interest" description="Disordered" evidence="3">
    <location>
        <begin position="844"/>
        <end position="871"/>
    </location>
</feature>
<feature type="compositionally biased region" description="Low complexity" evidence="3">
    <location>
        <begin position="27"/>
        <end position="44"/>
    </location>
</feature>
<feature type="compositionally biased region" description="Polar residues" evidence="3">
    <location>
        <begin position="537"/>
        <end position="560"/>
    </location>
</feature>
<feature type="compositionally biased region" description="Low complexity" evidence="3">
    <location>
        <begin position="561"/>
        <end position="572"/>
    </location>
</feature>
<feature type="compositionally biased region" description="Polar residues" evidence="3">
    <location>
        <begin position="582"/>
        <end position="593"/>
    </location>
</feature>
<feature type="compositionally biased region" description="Polar residues" evidence="3">
    <location>
        <begin position="709"/>
        <end position="732"/>
    </location>
</feature>
<feature type="compositionally biased region" description="Basic and acidic residues" evidence="3">
    <location>
        <begin position="769"/>
        <end position="794"/>
    </location>
</feature>
<feature type="compositionally biased region" description="Polar residues" evidence="3">
    <location>
        <begin position="796"/>
        <end position="806"/>
    </location>
</feature>
<comment type="function">
    <text evidence="1">May be involved in a process influencing telomere capping.</text>
</comment>
<comment type="subcellular location">
    <subcellularLocation>
        <location evidence="1">Vacuole</location>
    </subcellularLocation>
</comment>
<comment type="similarity">
    <text evidence="4">Belongs to the WD repeat RTC1 family.</text>
</comment>
<evidence type="ECO:0000250" key="1"/>
<evidence type="ECO:0000255" key="2">
    <source>
        <dbReference type="PROSITE-ProRule" id="PRU00175"/>
    </source>
</evidence>
<evidence type="ECO:0000256" key="3">
    <source>
        <dbReference type="SAM" id="MobiDB-lite"/>
    </source>
</evidence>
<evidence type="ECO:0000305" key="4"/>
<reference key="1">
    <citation type="journal article" date="2004" name="Proc. Natl. Acad. Sci. U.S.A.">
        <title>The diploid genome sequence of Candida albicans.</title>
        <authorList>
            <person name="Jones T."/>
            <person name="Federspiel N.A."/>
            <person name="Chibana H."/>
            <person name="Dungan J."/>
            <person name="Kalman S."/>
            <person name="Magee B.B."/>
            <person name="Newport G."/>
            <person name="Thorstenson Y.R."/>
            <person name="Agabian N."/>
            <person name="Magee P.T."/>
            <person name="Davis R.W."/>
            <person name="Scherer S."/>
        </authorList>
    </citation>
    <scope>NUCLEOTIDE SEQUENCE [LARGE SCALE GENOMIC DNA]</scope>
    <source>
        <strain>SC5314 / ATCC MYA-2876</strain>
    </source>
</reference>
<reference key="2">
    <citation type="journal article" date="2007" name="Genome Biol.">
        <title>Assembly of the Candida albicans genome into sixteen supercontigs aligned on the eight chromosomes.</title>
        <authorList>
            <person name="van het Hoog M."/>
            <person name="Rast T.J."/>
            <person name="Martchenko M."/>
            <person name="Grindle S."/>
            <person name="Dignard D."/>
            <person name="Hogues H."/>
            <person name="Cuomo C."/>
            <person name="Berriman M."/>
            <person name="Scherer S."/>
            <person name="Magee B.B."/>
            <person name="Whiteway M."/>
            <person name="Chibana H."/>
            <person name="Nantel A."/>
            <person name="Magee P.T."/>
        </authorList>
    </citation>
    <scope>GENOME REANNOTATION</scope>
    <source>
        <strain>SC5314 / ATCC MYA-2876</strain>
    </source>
</reference>
<reference key="3">
    <citation type="journal article" date="2013" name="Genome Biol.">
        <title>Assembly of a phased diploid Candida albicans genome facilitates allele-specific measurements and provides a simple model for repeat and indel structure.</title>
        <authorList>
            <person name="Muzzey D."/>
            <person name="Schwartz K."/>
            <person name="Weissman J.S."/>
            <person name="Sherlock G."/>
        </authorList>
    </citation>
    <scope>NUCLEOTIDE SEQUENCE [LARGE SCALE GENOMIC DNA]</scope>
    <scope>GENOME REANNOTATION</scope>
    <source>
        <strain>SC5314 / ATCC MYA-2876</strain>
    </source>
</reference>
<name>RTC1_CANAL</name>
<organism>
    <name type="scientific">Candida albicans (strain SC5314 / ATCC MYA-2876)</name>
    <name type="common">Yeast</name>
    <dbReference type="NCBI Taxonomy" id="237561"/>
    <lineage>
        <taxon>Eukaryota</taxon>
        <taxon>Fungi</taxon>
        <taxon>Dikarya</taxon>
        <taxon>Ascomycota</taxon>
        <taxon>Saccharomycotina</taxon>
        <taxon>Pichiomycetes</taxon>
        <taxon>Debaryomycetaceae</taxon>
        <taxon>Candida/Lodderomyces clade</taxon>
        <taxon>Candida</taxon>
    </lineage>
</organism>
<proteinExistence type="inferred from homology"/>
<accession>Q5ACL4</accession>
<accession>A0A1D8PU94</accession>
<sequence length="1088" mass="120975">MSQSNSHGQSNLAKFAFNIYGTLSTNSSTPQSHEISPSSSLSSSRSKKQTSQYNTQDTNNNRLSYYCDKEIISLSQLNCSLSIGGYSGDLQHHVVIGGKNYLRLLCVSESQQRIISGINLLESKSIYNSRAPNKLINVNTIKTFADTIATGLSNGVVSIYKISPNGQSKVTGKYSDHNRTINSLDFIESENQLLSGSQDGTIKLWDLRSSSTKPVMTVQANLHSDPIRACQYSPHSAVRNKICVLSVHDSGALCKFDLRTKSGGKVYSPEKKWNLHTGPALSLHIHPEKELVVTGGRDKRISIFNYGERQSRNTPQNLINTYGPVVKVRWSTYTNTEETAEEFEENKQAKPNTLYNYDIACSYLNDDPTITIYNLGRKFIPKQIIHSKKPIQNFIWARNETRSRKIWTISKSSTFSSYNLDRLEDSDVSRPIEDLNNIAMTWDNNNDFCAVSQARYDYDLETYENGINETTEENFDAERNYSLGNEELIHSQANSLTASPVDKPQLTRSLTFNPASSFSTFSPVLVARAATGFLQNDSATSSSSIPNMQVSSSRPKLTRNTSQTTQDSSSSQFASVLPPPSASQTYSSPQYKKNNPPRFMNNPAYVIPVSIPIPANDEYVFRKLSSESLVSTPDGFTLVDVCLLNASVAASVGNNRTSQIWRLLAVSIQEEFESGIEPRRIYAFQPEAINKLPQDVQETSTNANDTLHAETTNSNFVESFKSTSTSGSQFGKQSDKDERKLQSKNSSGNLMDMINKANRTNSFSATSFKFKEQERKEDESQKAQSIKDENERASIHSKSAPISISSHPEDLDDENMGSNNSAALKFSPPSVGVSIPSTRIISSSLASSPKSVRGPSGVKSHISRSRPSPPVQTWLKQKNLEVSNGSAMASTSGLSLTLKRNKTNEEGDQLTKAWKFKSLLRKSLDYATLQGDIIFCSTAALLFYDIVPEIISQFECLEWLGIYIEVLQRKRLFVNAINVIKCATADIQEKLQKLYCQDLSLRFYCSNCQALLVNEKSKFSGKGEFGYWYCDECSKLQSQCVYCNEPCKGLAVTVGLKCGHHGHFGCLKEWFIEDQNTECPGGCGYQII</sequence>
<keyword id="KW-0479">Metal-binding</keyword>
<keyword id="KW-1185">Reference proteome</keyword>
<keyword id="KW-0677">Repeat</keyword>
<keyword id="KW-0926">Vacuole</keyword>
<keyword id="KW-0853">WD repeat</keyword>
<keyword id="KW-0862">Zinc</keyword>
<keyword id="KW-0863">Zinc-finger</keyword>